<accession>B8D9B5</accession>
<evidence type="ECO:0000255" key="1">
    <source>
        <dbReference type="HAMAP-Rule" id="MF_00262"/>
    </source>
</evidence>
<organism>
    <name type="scientific">Buchnera aphidicola subsp. Acyrthosiphon pisum (strain 5A)</name>
    <dbReference type="NCBI Taxonomy" id="563178"/>
    <lineage>
        <taxon>Bacteria</taxon>
        <taxon>Pseudomonadati</taxon>
        <taxon>Pseudomonadota</taxon>
        <taxon>Gammaproteobacteria</taxon>
        <taxon>Enterobacterales</taxon>
        <taxon>Erwiniaceae</taxon>
        <taxon>Buchnera</taxon>
    </lineage>
</organism>
<dbReference type="EMBL" id="CP001161">
    <property type="protein sequence ID" value="ACL30686.1"/>
    <property type="molecule type" value="Genomic_DNA"/>
</dbReference>
<dbReference type="RefSeq" id="WP_009874280.1">
    <property type="nucleotide sequence ID" value="NC_011833.1"/>
</dbReference>
<dbReference type="SMR" id="B8D9B5"/>
<dbReference type="KEGG" id="bap:BUAP5A_318"/>
<dbReference type="HOGENOM" id="CLU_137929_2_2_6"/>
<dbReference type="OrthoDB" id="9802655at2"/>
<dbReference type="Proteomes" id="UP000006904">
    <property type="component" value="Chromosome"/>
</dbReference>
<dbReference type="GO" id="GO:0051301">
    <property type="term" value="P:cell division"/>
    <property type="evidence" value="ECO:0007669"/>
    <property type="project" value="UniProtKB-KW"/>
</dbReference>
<dbReference type="GO" id="GO:0032955">
    <property type="term" value="P:regulation of division septum assembly"/>
    <property type="evidence" value="ECO:0007669"/>
    <property type="project" value="InterPro"/>
</dbReference>
<dbReference type="FunFam" id="3.30.1070.10:FF:000001">
    <property type="entry name" value="Cell division topological specificity factor"/>
    <property type="match status" value="1"/>
</dbReference>
<dbReference type="Gene3D" id="3.30.1070.10">
    <property type="entry name" value="Cell division topological specificity factor MinE"/>
    <property type="match status" value="1"/>
</dbReference>
<dbReference type="HAMAP" id="MF_00262">
    <property type="entry name" value="MinE"/>
    <property type="match status" value="1"/>
</dbReference>
<dbReference type="InterPro" id="IPR005527">
    <property type="entry name" value="MinE"/>
</dbReference>
<dbReference type="InterPro" id="IPR036707">
    <property type="entry name" value="MinE_sf"/>
</dbReference>
<dbReference type="NCBIfam" id="TIGR01215">
    <property type="entry name" value="minE"/>
    <property type="match status" value="1"/>
</dbReference>
<dbReference type="NCBIfam" id="NF001422">
    <property type="entry name" value="PRK00296.1"/>
    <property type="match status" value="1"/>
</dbReference>
<dbReference type="Pfam" id="PF03776">
    <property type="entry name" value="MinE"/>
    <property type="match status" value="1"/>
</dbReference>
<dbReference type="SUPFAM" id="SSF55229">
    <property type="entry name" value="Cell division protein MinE topological specificity domain"/>
    <property type="match status" value="1"/>
</dbReference>
<gene>
    <name evidence="1" type="primary">minE</name>
    <name type="ordered locus">BUAP5A_318</name>
</gene>
<name>MINE_BUCA5</name>
<comment type="function">
    <text evidence="1">Prevents the cell division inhibition by proteins MinC and MinD at internal division sites while permitting inhibition at polar sites. This ensures cell division at the proper site by restricting the formation of a division septum at the midpoint of the long axis of the cell.</text>
</comment>
<comment type="similarity">
    <text evidence="1">Belongs to the MinE family.</text>
</comment>
<keyword id="KW-0131">Cell cycle</keyword>
<keyword id="KW-0132">Cell division</keyword>
<feature type="chain" id="PRO_1000191269" description="Cell division topological specificity factor">
    <location>
        <begin position="1"/>
        <end position="83"/>
    </location>
</feature>
<reference key="1">
    <citation type="journal article" date="2009" name="Science">
        <title>The dynamics and time scale of ongoing genomic erosion in symbiotic bacteria.</title>
        <authorList>
            <person name="Moran N.A."/>
            <person name="McLaughlin H.J."/>
            <person name="Sorek R."/>
        </authorList>
    </citation>
    <scope>NUCLEOTIDE SEQUENCE [LARGE SCALE GENOMIC DNA]</scope>
    <source>
        <strain>5A</strain>
    </source>
</reference>
<protein>
    <recommendedName>
        <fullName evidence="1">Cell division topological specificity factor</fullName>
    </recommendedName>
</protein>
<sequence>MALLDFFLSRNKNTANVAKERLQIIVAEQRKYNNEPDYFPQLKREILSVICKYVNIEPNMVTVQLDQKKEDISILELNIILPD</sequence>
<proteinExistence type="inferred from homology"/>